<dbReference type="PIR" id="S38266">
    <property type="entry name" value="S38266"/>
</dbReference>
<dbReference type="GO" id="GO:0042302">
    <property type="term" value="F:structural constituent of cuticle"/>
    <property type="evidence" value="ECO:0007669"/>
    <property type="project" value="UniProtKB-KW"/>
</dbReference>
<dbReference type="InterPro" id="IPR022727">
    <property type="entry name" value="Cuticle_C1"/>
</dbReference>
<dbReference type="PANTHER" id="PTHR39068">
    <property type="entry name" value="LARVAL/PUPAL CUTICLE PROTEIN H1C-LIKE PROTEIN-RELATED"/>
    <property type="match status" value="1"/>
</dbReference>
<dbReference type="PANTHER" id="PTHR39068:SF5">
    <property type="entry name" value="PUPAL CUTICLE PROTEIN C1B-LIKE PROTEIN"/>
    <property type="match status" value="1"/>
</dbReference>
<dbReference type="Pfam" id="PF11018">
    <property type="entry name" value="Cuticle_3"/>
    <property type="match status" value="1"/>
</dbReference>
<reference key="1">
    <citation type="journal article" date="1993" name="Eur. J. Biochem.">
        <title>Combined plasma-desorption mass spectrometry and Edman degradation applied to simultaneous sequence determination of isoforms of structural proteins from the cuticle of Locusta migratoria.</title>
        <authorList>
            <person name="Andreasen L."/>
            <person name="Hoejrup P."/>
            <person name="Andersen S.O."/>
            <person name="Roepstorff P."/>
        </authorList>
    </citation>
    <scope>PROTEIN SEQUENCE</scope>
</reference>
<organism>
    <name type="scientific">Locusta migratoria</name>
    <name type="common">Migratory locust</name>
    <dbReference type="NCBI Taxonomy" id="7004"/>
    <lineage>
        <taxon>Eukaryota</taxon>
        <taxon>Metazoa</taxon>
        <taxon>Ecdysozoa</taxon>
        <taxon>Arthropoda</taxon>
        <taxon>Hexapoda</taxon>
        <taxon>Insecta</taxon>
        <taxon>Pterygota</taxon>
        <taxon>Neoptera</taxon>
        <taxon>Polyneoptera</taxon>
        <taxon>Orthoptera</taxon>
        <taxon>Caelifera</taxon>
        <taxon>Acrididea</taxon>
        <taxon>Acridomorpha</taxon>
        <taxon>Acridoidea</taxon>
        <taxon>Acrididae</taxon>
        <taxon>Oedipodinae</taxon>
        <taxon>Locusta</taxon>
    </lineage>
</organism>
<comment type="function">
    <text>Component of the cuticle of migratory locust which contains more than 100 different structural proteins.</text>
</comment>
<comment type="domain">
    <text>The tetrapeptide (A-A-P-[AV]) repeats found throughout the protein are also present in many proteins constituting the protective envelope of other species.</text>
</comment>
<name>CU67A_LOCMI</name>
<keyword id="KW-0193">Cuticle</keyword>
<keyword id="KW-0903">Direct protein sequencing</keyword>
<keyword id="KW-0677">Repeat</keyword>
<accession>P80231</accession>
<protein>
    <recommendedName>
        <fullName>Cuticle protein 67, isoform A</fullName>
    </recommendedName>
    <alternativeName>
        <fullName>LM-ACP 67A</fullName>
        <shortName>LM-67A</shortName>
    </alternativeName>
</protein>
<proteinExistence type="evidence at protein level"/>
<feature type="chain" id="PRO_0000196110" description="Cuticle protein 67, isoform A">
    <location>
        <begin position="1"/>
        <end position="98"/>
    </location>
</feature>
<feature type="repeat" description="1">
    <location>
        <begin position="7"/>
        <end position="10"/>
    </location>
</feature>
<feature type="repeat" description="2">
    <location>
        <begin position="15"/>
        <end position="18"/>
    </location>
</feature>
<feature type="repeat" description="3">
    <location>
        <begin position="22"/>
        <end position="25"/>
    </location>
</feature>
<feature type="repeat" description="4">
    <location>
        <begin position="79"/>
        <end position="82"/>
    </location>
</feature>
<feature type="repeat" description="5">
    <location>
        <begin position="86"/>
        <end position="89"/>
    </location>
</feature>
<feature type="repeat" description="6">
    <location>
        <begin position="92"/>
        <end position="95"/>
    </location>
</feature>
<sequence length="98" mass="9862">GYLGGYAAPALAYGAAPAVAYAAPAAYAPAALTSQSSNILRSYGNLGQVSTYTKTVDTPYSSVTKSDVRVSNDAIAHVAAPALAYAAPAAYAAPAYYH</sequence>